<protein>
    <recommendedName>
        <fullName evidence="1">Probable manganese efflux pump MntP</fullName>
    </recommendedName>
</protein>
<sequence length="188" mass="20113">MNITATVLLAFGMSMDAFAASIGKGAPLHKPKFSEALRTGLIFGAVETLTPLIGWGMGMLASRFVLEWNHWIAFVLLIFLGGRMIIEGFRGADDEDEEPRRRHGFWLLVTTAIATSLDAMAVGVGLAFLQVNIIATALAIGCATLIMSTLGMMVGRFIGSIIGKKAEILGGLVLIGIGVQILWTHFHG</sequence>
<feature type="chain" id="PRO_0000292545" description="Probable manganese efflux pump MntP">
    <location>
        <begin position="1"/>
        <end position="188"/>
    </location>
</feature>
<feature type="transmembrane region" description="Helical" evidence="1">
    <location>
        <begin position="3"/>
        <end position="23"/>
    </location>
</feature>
<feature type="transmembrane region" description="Helical" evidence="1">
    <location>
        <begin position="66"/>
        <end position="86"/>
    </location>
</feature>
<feature type="transmembrane region" description="Helical" evidence="1">
    <location>
        <begin position="106"/>
        <end position="128"/>
    </location>
</feature>
<feature type="transmembrane region" description="Helical" evidence="1">
    <location>
        <begin position="143"/>
        <end position="163"/>
    </location>
</feature>
<feature type="transmembrane region" description="Helical" evidence="1">
    <location>
        <begin position="168"/>
        <end position="188"/>
    </location>
</feature>
<comment type="function">
    <text evidence="1">Probably functions as a manganese efflux pump.</text>
</comment>
<comment type="subcellular location">
    <subcellularLocation>
        <location evidence="1">Cell inner membrane</location>
        <topology evidence="1">Multi-pass membrane protein</topology>
    </subcellularLocation>
</comment>
<comment type="similarity">
    <text evidence="1">Belongs to the MntP (TC 9.B.29) family.</text>
</comment>
<comment type="sequence caution" evidence="2">
    <conflict type="erroneous initiation">
        <sequence resource="EMBL-CDS" id="ABF03600"/>
    </conflict>
</comment>
<gene>
    <name evidence="1" type="primary">mntP</name>
    <name type="synonym">yebN</name>
    <name type="ordered locus">SFV_1407</name>
</gene>
<name>MNTP_SHIF8</name>
<evidence type="ECO:0000255" key="1">
    <source>
        <dbReference type="HAMAP-Rule" id="MF_01521"/>
    </source>
</evidence>
<evidence type="ECO:0000305" key="2"/>
<dbReference type="EMBL" id="CP000266">
    <property type="protein sequence ID" value="ABF03600.1"/>
    <property type="status" value="ALT_INIT"/>
    <property type="molecule type" value="Genomic_DNA"/>
</dbReference>
<dbReference type="RefSeq" id="WP_001668667.1">
    <property type="nucleotide sequence ID" value="NC_008258.1"/>
</dbReference>
<dbReference type="KEGG" id="sfv:SFV_1407"/>
<dbReference type="HOGENOM" id="CLU_096410_0_0_6"/>
<dbReference type="Proteomes" id="UP000000659">
    <property type="component" value="Chromosome"/>
</dbReference>
<dbReference type="GO" id="GO:0005886">
    <property type="term" value="C:plasma membrane"/>
    <property type="evidence" value="ECO:0007669"/>
    <property type="project" value="UniProtKB-SubCell"/>
</dbReference>
<dbReference type="GO" id="GO:0005384">
    <property type="term" value="F:manganese ion transmembrane transporter activity"/>
    <property type="evidence" value="ECO:0007669"/>
    <property type="project" value="UniProtKB-UniRule"/>
</dbReference>
<dbReference type="HAMAP" id="MF_01521">
    <property type="entry name" value="MntP_pump"/>
    <property type="match status" value="1"/>
</dbReference>
<dbReference type="InterPro" id="IPR003810">
    <property type="entry name" value="Mntp/YtaF"/>
</dbReference>
<dbReference type="InterPro" id="IPR022929">
    <property type="entry name" value="Put_MntP"/>
</dbReference>
<dbReference type="NCBIfam" id="NF008546">
    <property type="entry name" value="PRK11469.1"/>
    <property type="match status" value="1"/>
</dbReference>
<dbReference type="PANTHER" id="PTHR35529">
    <property type="entry name" value="MANGANESE EFFLUX PUMP MNTP-RELATED"/>
    <property type="match status" value="1"/>
</dbReference>
<dbReference type="PANTHER" id="PTHR35529:SF1">
    <property type="entry name" value="MANGANESE EFFLUX PUMP MNTP-RELATED"/>
    <property type="match status" value="1"/>
</dbReference>
<dbReference type="Pfam" id="PF02659">
    <property type="entry name" value="Mntp"/>
    <property type="match status" value="1"/>
</dbReference>
<accession>Q0T515</accession>
<proteinExistence type="inferred from homology"/>
<reference key="1">
    <citation type="journal article" date="2006" name="BMC Genomics">
        <title>Complete genome sequence of Shigella flexneri 5b and comparison with Shigella flexneri 2a.</title>
        <authorList>
            <person name="Nie H."/>
            <person name="Yang F."/>
            <person name="Zhang X."/>
            <person name="Yang J."/>
            <person name="Chen L."/>
            <person name="Wang J."/>
            <person name="Xiong Z."/>
            <person name="Peng J."/>
            <person name="Sun L."/>
            <person name="Dong J."/>
            <person name="Xue Y."/>
            <person name="Xu X."/>
            <person name="Chen S."/>
            <person name="Yao Z."/>
            <person name="Shen Y."/>
            <person name="Jin Q."/>
        </authorList>
    </citation>
    <scope>NUCLEOTIDE SEQUENCE [LARGE SCALE GENOMIC DNA]</scope>
    <source>
        <strain>8401</strain>
    </source>
</reference>
<keyword id="KW-0997">Cell inner membrane</keyword>
<keyword id="KW-1003">Cell membrane</keyword>
<keyword id="KW-0406">Ion transport</keyword>
<keyword id="KW-0464">Manganese</keyword>
<keyword id="KW-0472">Membrane</keyword>
<keyword id="KW-0812">Transmembrane</keyword>
<keyword id="KW-1133">Transmembrane helix</keyword>
<keyword id="KW-0813">Transport</keyword>
<organism>
    <name type="scientific">Shigella flexneri serotype 5b (strain 8401)</name>
    <dbReference type="NCBI Taxonomy" id="373384"/>
    <lineage>
        <taxon>Bacteria</taxon>
        <taxon>Pseudomonadati</taxon>
        <taxon>Pseudomonadota</taxon>
        <taxon>Gammaproteobacteria</taxon>
        <taxon>Enterobacterales</taxon>
        <taxon>Enterobacteriaceae</taxon>
        <taxon>Shigella</taxon>
    </lineage>
</organism>